<sequence length="252" mass="26923">MRKKVIAGNWKMNKVLSEAGEFMNSVVPKAPKGNDVEAIVCAPFPFLSKLVEQAKGSEVKVAAQNMHFEDSGAFTGEVSPVMLKDLGVTHVVLGHSERRELFAETNELVNKKTKAAFAHDLTPIVCVGETLDQREANETMNIVGEQVKQAVAGLTNEQVAETIIAYEPVWAIGTGKTATSEQANEVCTEIRKVVAEVTSADVAEKVIIQYGGSVKPANVDELLAQSDIDGALVGGASLDPESFLQLVEAGTK</sequence>
<reference key="1">
    <citation type="journal article" date="2002" name="Nucleic Acids Res.">
        <title>Genome sequence of Oceanobacillus iheyensis isolated from the Iheya Ridge and its unexpected adaptive capabilities to extreme environments.</title>
        <authorList>
            <person name="Takami H."/>
            <person name="Takaki Y."/>
            <person name="Uchiyama I."/>
        </authorList>
    </citation>
    <scope>NUCLEOTIDE SEQUENCE [LARGE SCALE GENOMIC DNA]</scope>
    <source>
        <strain>DSM 14371 / CIP 107618 / JCM 11309 / KCTC 3954 / HTE831</strain>
    </source>
</reference>
<accession>Q8ENP4</accession>
<dbReference type="EC" id="5.3.1.1" evidence="1"/>
<dbReference type="EMBL" id="BA000028">
    <property type="protein sequence ID" value="BAC14392.1"/>
    <property type="molecule type" value="Genomic_DNA"/>
</dbReference>
<dbReference type="RefSeq" id="WP_011066827.1">
    <property type="nucleotide sequence ID" value="NC_004193.1"/>
</dbReference>
<dbReference type="SMR" id="Q8ENP4"/>
<dbReference type="STRING" id="221109.gene:10734687"/>
<dbReference type="KEGG" id="oih:OB2436"/>
<dbReference type="eggNOG" id="COG0149">
    <property type="taxonomic scope" value="Bacteria"/>
</dbReference>
<dbReference type="HOGENOM" id="CLU_024251_2_3_9"/>
<dbReference type="OrthoDB" id="9809429at2"/>
<dbReference type="PhylomeDB" id="Q8ENP4"/>
<dbReference type="UniPathway" id="UPA00109">
    <property type="reaction ID" value="UER00189"/>
</dbReference>
<dbReference type="UniPathway" id="UPA00138"/>
<dbReference type="Proteomes" id="UP000000822">
    <property type="component" value="Chromosome"/>
</dbReference>
<dbReference type="GO" id="GO:0005829">
    <property type="term" value="C:cytosol"/>
    <property type="evidence" value="ECO:0007669"/>
    <property type="project" value="TreeGrafter"/>
</dbReference>
<dbReference type="GO" id="GO:0004807">
    <property type="term" value="F:triose-phosphate isomerase activity"/>
    <property type="evidence" value="ECO:0007669"/>
    <property type="project" value="UniProtKB-UniRule"/>
</dbReference>
<dbReference type="GO" id="GO:0006094">
    <property type="term" value="P:gluconeogenesis"/>
    <property type="evidence" value="ECO:0007669"/>
    <property type="project" value="UniProtKB-UniRule"/>
</dbReference>
<dbReference type="GO" id="GO:0046166">
    <property type="term" value="P:glyceraldehyde-3-phosphate biosynthetic process"/>
    <property type="evidence" value="ECO:0007669"/>
    <property type="project" value="TreeGrafter"/>
</dbReference>
<dbReference type="GO" id="GO:0019563">
    <property type="term" value="P:glycerol catabolic process"/>
    <property type="evidence" value="ECO:0007669"/>
    <property type="project" value="TreeGrafter"/>
</dbReference>
<dbReference type="GO" id="GO:0006096">
    <property type="term" value="P:glycolytic process"/>
    <property type="evidence" value="ECO:0007669"/>
    <property type="project" value="UniProtKB-UniRule"/>
</dbReference>
<dbReference type="CDD" id="cd00311">
    <property type="entry name" value="TIM"/>
    <property type="match status" value="1"/>
</dbReference>
<dbReference type="FunFam" id="3.20.20.70:FF:000016">
    <property type="entry name" value="Triosephosphate isomerase"/>
    <property type="match status" value="1"/>
</dbReference>
<dbReference type="Gene3D" id="3.20.20.70">
    <property type="entry name" value="Aldolase class I"/>
    <property type="match status" value="1"/>
</dbReference>
<dbReference type="HAMAP" id="MF_00147_B">
    <property type="entry name" value="TIM_B"/>
    <property type="match status" value="1"/>
</dbReference>
<dbReference type="InterPro" id="IPR013785">
    <property type="entry name" value="Aldolase_TIM"/>
</dbReference>
<dbReference type="InterPro" id="IPR035990">
    <property type="entry name" value="TIM_sf"/>
</dbReference>
<dbReference type="InterPro" id="IPR022896">
    <property type="entry name" value="TrioseP_Isoase_bac/euk"/>
</dbReference>
<dbReference type="InterPro" id="IPR000652">
    <property type="entry name" value="Triosephosphate_isomerase"/>
</dbReference>
<dbReference type="InterPro" id="IPR020861">
    <property type="entry name" value="Triosephosphate_isomerase_AS"/>
</dbReference>
<dbReference type="NCBIfam" id="TIGR00419">
    <property type="entry name" value="tim"/>
    <property type="match status" value="1"/>
</dbReference>
<dbReference type="PANTHER" id="PTHR21139">
    <property type="entry name" value="TRIOSEPHOSPHATE ISOMERASE"/>
    <property type="match status" value="1"/>
</dbReference>
<dbReference type="PANTHER" id="PTHR21139:SF42">
    <property type="entry name" value="TRIOSEPHOSPHATE ISOMERASE"/>
    <property type="match status" value="1"/>
</dbReference>
<dbReference type="Pfam" id="PF00121">
    <property type="entry name" value="TIM"/>
    <property type="match status" value="1"/>
</dbReference>
<dbReference type="SUPFAM" id="SSF51351">
    <property type="entry name" value="Triosephosphate isomerase (TIM)"/>
    <property type="match status" value="1"/>
</dbReference>
<dbReference type="PROSITE" id="PS00171">
    <property type="entry name" value="TIM_1"/>
    <property type="match status" value="1"/>
</dbReference>
<dbReference type="PROSITE" id="PS51440">
    <property type="entry name" value="TIM_2"/>
    <property type="match status" value="1"/>
</dbReference>
<comment type="function">
    <text evidence="1">Involved in the gluconeogenesis. Catalyzes stereospecifically the conversion of dihydroxyacetone phosphate (DHAP) to D-glyceraldehyde-3-phosphate (G3P).</text>
</comment>
<comment type="catalytic activity">
    <reaction evidence="1">
        <text>D-glyceraldehyde 3-phosphate = dihydroxyacetone phosphate</text>
        <dbReference type="Rhea" id="RHEA:18585"/>
        <dbReference type="ChEBI" id="CHEBI:57642"/>
        <dbReference type="ChEBI" id="CHEBI:59776"/>
        <dbReference type="EC" id="5.3.1.1"/>
    </reaction>
</comment>
<comment type="pathway">
    <text evidence="1">Carbohydrate biosynthesis; gluconeogenesis.</text>
</comment>
<comment type="pathway">
    <text evidence="1">Carbohydrate degradation; glycolysis; D-glyceraldehyde 3-phosphate from glycerone phosphate: step 1/1.</text>
</comment>
<comment type="subunit">
    <text evidence="1">Homodimer.</text>
</comment>
<comment type="subcellular location">
    <subcellularLocation>
        <location evidence="1">Cytoplasm</location>
    </subcellularLocation>
</comment>
<comment type="similarity">
    <text evidence="1">Belongs to the triosephosphate isomerase family.</text>
</comment>
<protein>
    <recommendedName>
        <fullName evidence="1">Triosephosphate isomerase</fullName>
        <shortName evidence="1">TIM</shortName>
        <shortName evidence="1">TPI</shortName>
        <ecNumber evidence="1">5.3.1.1</ecNumber>
    </recommendedName>
    <alternativeName>
        <fullName evidence="1">Triose-phosphate isomerase</fullName>
    </alternativeName>
</protein>
<organism>
    <name type="scientific">Oceanobacillus iheyensis (strain DSM 14371 / CIP 107618 / JCM 11309 / KCTC 3954 / HTE831)</name>
    <dbReference type="NCBI Taxonomy" id="221109"/>
    <lineage>
        <taxon>Bacteria</taxon>
        <taxon>Bacillati</taxon>
        <taxon>Bacillota</taxon>
        <taxon>Bacilli</taxon>
        <taxon>Bacillales</taxon>
        <taxon>Bacillaceae</taxon>
        <taxon>Oceanobacillus</taxon>
    </lineage>
</organism>
<proteinExistence type="inferred from homology"/>
<feature type="chain" id="PRO_0000090261" description="Triosephosphate isomerase">
    <location>
        <begin position="1"/>
        <end position="252"/>
    </location>
</feature>
<feature type="active site" description="Electrophile" evidence="1">
    <location>
        <position position="95"/>
    </location>
</feature>
<feature type="active site" description="Proton acceptor" evidence="1">
    <location>
        <position position="167"/>
    </location>
</feature>
<feature type="binding site" evidence="1">
    <location>
        <begin position="9"/>
        <end position="11"/>
    </location>
    <ligand>
        <name>substrate</name>
    </ligand>
</feature>
<feature type="binding site" evidence="1">
    <location>
        <position position="173"/>
    </location>
    <ligand>
        <name>substrate</name>
    </ligand>
</feature>
<feature type="binding site" evidence="1">
    <location>
        <position position="213"/>
    </location>
    <ligand>
        <name>substrate</name>
    </ligand>
</feature>
<feature type="binding site" evidence="1">
    <location>
        <begin position="234"/>
        <end position="235"/>
    </location>
    <ligand>
        <name>substrate</name>
    </ligand>
</feature>
<feature type="modified residue" description="Phosphoserine" evidence="1">
    <location>
        <position position="213"/>
    </location>
</feature>
<keyword id="KW-0963">Cytoplasm</keyword>
<keyword id="KW-0312">Gluconeogenesis</keyword>
<keyword id="KW-0324">Glycolysis</keyword>
<keyword id="KW-0413">Isomerase</keyword>
<keyword id="KW-0597">Phosphoprotein</keyword>
<keyword id="KW-1185">Reference proteome</keyword>
<name>TPIS_OCEIH</name>
<gene>
    <name evidence="1" type="primary">tpiA</name>
    <name type="synonym">tpi</name>
    <name type="ordered locus">OB2436</name>
</gene>
<evidence type="ECO:0000255" key="1">
    <source>
        <dbReference type="HAMAP-Rule" id="MF_00147"/>
    </source>
</evidence>